<name>NDF1_RAT</name>
<gene>
    <name type="primary">Neurod1</name>
    <name type="synonym">Neurod</name>
</gene>
<proteinExistence type="evidence at protein level"/>
<protein>
    <recommendedName>
        <fullName>Neurogenic differentiation factor 1</fullName>
        <shortName>NeuroD1</shortName>
    </recommendedName>
    <alternativeName>
        <fullName>Basic helix-loop-helix factor 1</fullName>
        <shortName>BHF-1</shortName>
    </alternativeName>
</protein>
<accession>Q64289</accession>
<accession>Q569P0</accession>
<feature type="chain" id="PRO_0000127384" description="Neurogenic differentiation factor 1">
    <location>
        <begin position="1"/>
        <end position="357"/>
    </location>
</feature>
<feature type="domain" description="bHLH" evidence="5">
    <location>
        <begin position="101"/>
        <end position="153"/>
    </location>
</feature>
<feature type="region of interest" description="Disordered" evidence="6">
    <location>
        <begin position="1"/>
        <end position="94"/>
    </location>
</feature>
<feature type="short sequence motif" description="Nuclear localization signal" evidence="4">
    <location>
        <begin position="87"/>
        <end position="93"/>
    </location>
</feature>
<feature type="compositionally biased region" description="Acidic residues" evidence="6">
    <location>
        <begin position="58"/>
        <end position="78"/>
    </location>
</feature>
<feature type="compositionally biased region" description="Basic residues" evidence="6">
    <location>
        <begin position="81"/>
        <end position="93"/>
    </location>
</feature>
<feature type="modified residue" description="Phosphoserine" evidence="3">
    <location>
        <position position="162"/>
    </location>
</feature>
<feature type="modified residue" description="Phosphoserine" evidence="3">
    <location>
        <position position="259"/>
    </location>
</feature>
<feature type="modified residue" description="Phosphoserine" evidence="3">
    <location>
        <position position="266"/>
    </location>
</feature>
<feature type="modified residue" description="Phosphoserine" evidence="10">
    <location>
        <position position="274"/>
    </location>
</feature>
<feature type="modified residue" description="Phosphoserine; by CaMK2" evidence="8">
    <location>
        <position position="336"/>
    </location>
</feature>
<feature type="mutagenesis site" description="No effect on subcellular location." evidence="7">
    <original>S</original>
    <variation>A</variation>
    <location>
        <position position="259"/>
    </location>
</feature>
<feature type="mutagenesis site" description="No effect on subcellular location." evidence="7">
    <original>T</original>
    <variation>A</variation>
    <location>
        <position position="262"/>
    </location>
</feature>
<feature type="mutagenesis site" description="No effect on subcellular location." evidence="7">
    <original>S</original>
    <variation>A</variation>
    <location>
        <position position="266"/>
    </location>
</feature>
<feature type="mutagenesis site" description="Impairs translocation from the cytoplasm to the nucleus upon glucose stimulation." evidence="7">
    <original>S</original>
    <variation>A</variation>
    <location>
        <position position="274"/>
    </location>
</feature>
<feature type="mutagenesis site" description="No effect on subcellular location." evidence="7">
    <original>S</original>
    <variation>D</variation>
    <location>
        <position position="274"/>
    </location>
</feature>
<reference key="1">
    <citation type="journal article" date="1996" name="Biochem. Biophys. Res. Commun.">
        <title>Cloning and expression of a rat brain basic helix-loop-helix factor.</title>
        <authorList>
            <person name="Kawakami H."/>
            <person name="Maruyama H."/>
            <person name="Yasunami M."/>
            <person name="Ohkubo H."/>
            <person name="Hara H."/>
            <person name="Saida T."/>
            <person name="Nakanishi S."/>
            <person name="Nakamura S."/>
        </authorList>
    </citation>
    <scope>NUCLEOTIDE SEQUENCE [MRNA]</scope>
    <source>
        <tissue>Cerebellum</tissue>
    </source>
</reference>
<reference key="2">
    <citation type="journal article" date="1999" name="Brain Res. Mol. Brain Res.">
        <title>Overexpression of NeuroD in PC12 cells alters morphology and enhances expression of the adenylate kinase isozyme 1 gene.</title>
        <authorList>
            <person name="Noma T."/>
            <person name="Yoon Y.S."/>
            <person name="Nakazawa A."/>
        </authorList>
    </citation>
    <scope>NUCLEOTIDE SEQUENCE [MRNA]</scope>
    <source>
        <tissue>Brain</tissue>
    </source>
</reference>
<reference key="3">
    <citation type="submission" date="1998-11" db="EMBL/GenBank/DDBJ databases">
        <title>Cloning of rat NeuroD/Beta2.</title>
        <authorList>
            <person name="Andersen F.G."/>
            <person name="Madsen O.D."/>
            <person name="Serup P."/>
        </authorList>
    </citation>
    <scope>NUCLEOTIDE SEQUENCE [MRNA]</scope>
    <source>
        <strain>New England Deaconess Hospital</strain>
        <tissue>Pancreatic islet</tissue>
    </source>
</reference>
<reference key="4">
    <citation type="journal article" date="2004" name="Genome Res.">
        <title>The status, quality, and expansion of the NIH full-length cDNA project: the Mammalian Gene Collection (MGC).</title>
        <authorList>
            <consortium name="The MGC Project Team"/>
        </authorList>
    </citation>
    <scope>NUCLEOTIDE SEQUENCE [LARGE SCALE MRNA]</scope>
    <source>
        <tissue>Brain</tissue>
    </source>
</reference>
<reference key="5">
    <citation type="submission" date="1996-12" db="EMBL/GenBank/DDBJ databases">
        <title>Developmental expression of neurogenic gene, NeuroD in the mammalian retina.</title>
        <authorList>
            <person name="Ahmad I."/>
            <person name="Acharay H.R."/>
        </authorList>
    </citation>
    <scope>NUCLEOTIDE SEQUENCE [MRNA] OF 88-200</scope>
    <source>
        <strain>Sprague-Dawley</strain>
        <tissue>Retina</tissue>
    </source>
</reference>
<reference key="6">
    <citation type="journal article" date="2002" name="FEBS Lett.">
        <title>Glucose induced MAPK signalling influences NeuroD1-mediated activation and nuclear localization.</title>
        <authorList>
            <person name="Petersen H.V."/>
            <person name="Jensen J.N."/>
            <person name="Stein R."/>
            <person name="Serup P."/>
        </authorList>
    </citation>
    <scope>SUBCELLULAR LOCATION</scope>
    <scope>MUTAGENESIS OF SER-259; THR-262; SER-266 AND SER-274</scope>
    <scope>PHOSPHORYLATION AT SER-274</scope>
</reference>
<reference key="7">
    <citation type="journal article" date="2004" name="Neuron">
        <title>A CaMKII-NeuroD signaling pathway specifies dendritic morphogenesis.</title>
        <authorList>
            <person name="Gaudilliere B."/>
            <person name="Konishi Y."/>
            <person name="de la Iglesia N."/>
            <person name="Yao G."/>
            <person name="Bonni A."/>
        </authorList>
    </citation>
    <scope>FUNCTION</scope>
    <scope>PHOSPHORYLATION AT SER-336</scope>
</reference>
<reference key="8">
    <citation type="journal article" date="2010" name="J. Neurosci.">
        <title>Modulations of NeuroD activity contribute to the differential effects of morphine and fentanyl on dendritic spine stability.</title>
        <authorList>
            <person name="Zheng H."/>
            <person name="Zeng Y."/>
            <person name="Chu J."/>
            <person name="Kam A.Y."/>
            <person name="Loh H.H."/>
            <person name="Law P.Y."/>
        </authorList>
    </citation>
    <scope>INDUCTION</scope>
</reference>
<evidence type="ECO:0000250" key="1"/>
<evidence type="ECO:0000250" key="2">
    <source>
        <dbReference type="UniProtKB" id="Q13562"/>
    </source>
</evidence>
<evidence type="ECO:0000250" key="3">
    <source>
        <dbReference type="UniProtKB" id="Q60867"/>
    </source>
</evidence>
<evidence type="ECO:0000255" key="4"/>
<evidence type="ECO:0000255" key="5">
    <source>
        <dbReference type="PROSITE-ProRule" id="PRU00981"/>
    </source>
</evidence>
<evidence type="ECO:0000256" key="6">
    <source>
        <dbReference type="SAM" id="MobiDB-lite"/>
    </source>
</evidence>
<evidence type="ECO:0000269" key="7">
    <source>
    </source>
</evidence>
<evidence type="ECO:0000269" key="8">
    <source>
    </source>
</evidence>
<evidence type="ECO:0000269" key="9">
    <source>
    </source>
</evidence>
<evidence type="ECO:0000305" key="10">
    <source>
    </source>
</evidence>
<sequence length="357" mass="40001">MTKSYSESGLMGEPQPQGPPSWTDECLSSQDEEHEADKKEDELEAMNAEEDSLRNGGEEEDEDEDLEEEEEEEEEEDDQKPKRRGPKKKKMTKARLERFKLRRMKANARERNRMHGLNAALDNLRKVVPCYSKTQKLSKIETLRLAKNYIWALSEILRSGKSPDLVSFVQTLCKGLSQPTTNLVAGCLQLNPRTFLPEQNPDMPPHLPTASASFPVHPYSYQSPGLPSPPYGTMDSSHVFHVKPPPHAYSAALEPFFESPLTDCTSPSFDGPLSPPLSINGNFSFKHEPSTEFEKNYAFTMHYPAATLAGPQSHGSIFSSGAAAPRCEIPIDNIMSFDSHSHHERVMSAQLNAIFHD</sequence>
<keyword id="KW-0010">Activator</keyword>
<keyword id="KW-0963">Cytoplasm</keyword>
<keyword id="KW-0217">Developmental protein</keyword>
<keyword id="KW-0221">Differentiation</keyword>
<keyword id="KW-0238">DNA-binding</keyword>
<keyword id="KW-0524">Neurogenesis</keyword>
<keyword id="KW-0539">Nucleus</keyword>
<keyword id="KW-0597">Phosphoprotein</keyword>
<keyword id="KW-1185">Reference proteome</keyword>
<keyword id="KW-0804">Transcription</keyword>
<keyword id="KW-0805">Transcription regulation</keyword>
<comment type="function">
    <text evidence="3 8">Acts as a transcriptional activator: mediates transcriptional activation by binding to E box-containing promoter consensus core sequences 5'-CANNTG-3' (By similarity). Associates with the p300/CBP transcription coactivator complex to stimulate transcription of the secretin gene as well as the gene encoding the cyclin-dependent kinase inhibitor CDKN1A (By similarity). Contributes to the regulation of several cell differentiation pathways, like those that promote the formation of early retinal ganglion cells, inner ear sensory neurons, granule cells forming either the cerebellum or the dentate gyrus cell layer of the hippocampus, endocrine islet cells of the pancreas and enteroendocrine cells of the small intestine (By similarity). Together with PAX6 or SIX3, is required for the regulation of amacrine cell fate specification (By similarity). Also required for dendrite morphogenesis and maintenance in the cerebellar cortex (PubMed:14741104). Associates with chromatin to enhancer regulatory elements in genes encoding key transcriptional regulators of neurogenesis (By similarity).</text>
</comment>
<comment type="subunit">
    <text evidence="2 3">Efficient DNA-binding requires dimerization with another bHLH protein. Heterodimer with TCF3/E47; the heterodimer is inhibited in presence of ID2, but not NR0B2, to E-box element. Interacts with EP300; the interaction is inhibited by NR0B2 (By similarity). Interacts with RREB1 (By similarity). Interacts with ATOH8 (By similarity).</text>
</comment>
<comment type="subcellular location">
    <subcellularLocation>
        <location evidence="7">Cytoplasm</location>
    </subcellularLocation>
    <subcellularLocation>
        <location evidence="5 7">Nucleus</location>
    </subcellularLocation>
    <text evidence="1">Colocalizes with NR0B2 in the nucleus (By similarity). In pancreatic islet cells, shuttles to the nucleus in response to glucose stimulation.</text>
</comment>
<comment type="induction">
    <text evidence="9">Up-regulated by fentanyl. Down-regulated by miR-190.</text>
</comment>
<comment type="PTM">
    <text evidence="1 7 8">Phosphorylated by MAPK1; phosphorylation regulates heterodimerization and DNA-binding activities. Phosphorylation on Ser-266 and Ser-274 increases transactivation on the insulin promoter in glucose-stimulated insulinoma cells (By similarity). Phosphorylated. In islet cells, phosphorylated on Ser-274 upon glucose stimulation; which may be required for nuclear localization. In activated neurons, phosphorylated on Ser-336 by CaMK2; which promotes dendritic growth.</text>
</comment>
<dbReference type="EMBL" id="D82075">
    <property type="protein sequence ID" value="BAA11536.1"/>
    <property type="molecule type" value="mRNA"/>
</dbReference>
<dbReference type="EMBL" id="D82074">
    <property type="protein sequence ID" value="BAA11535.1"/>
    <property type="molecule type" value="mRNA"/>
</dbReference>
<dbReference type="EMBL" id="D82945">
    <property type="protein sequence ID" value="BAA81821.1"/>
    <property type="molecule type" value="mRNA"/>
</dbReference>
<dbReference type="EMBL" id="AF107728">
    <property type="protein sequence ID" value="AAD19609.1"/>
    <property type="molecule type" value="mRNA"/>
</dbReference>
<dbReference type="EMBL" id="BC092367">
    <property type="protein sequence ID" value="AAH92367.1"/>
    <property type="molecule type" value="mRNA"/>
</dbReference>
<dbReference type="EMBL" id="BC094526">
    <property type="protein sequence ID" value="AAH94526.1"/>
    <property type="molecule type" value="mRNA"/>
</dbReference>
<dbReference type="EMBL" id="U80603">
    <property type="protein sequence ID" value="AAB38744.1"/>
    <property type="molecule type" value="mRNA"/>
</dbReference>
<dbReference type="PIR" id="JC4703">
    <property type="entry name" value="JC4703"/>
</dbReference>
<dbReference type="RefSeq" id="NP_062091.1">
    <property type="nucleotide sequence ID" value="NM_019218.3"/>
</dbReference>
<dbReference type="SMR" id="Q64289"/>
<dbReference type="BioGRID" id="248101">
    <property type="interactions" value="2"/>
</dbReference>
<dbReference type="FunCoup" id="Q64289">
    <property type="interactions" value="343"/>
</dbReference>
<dbReference type="STRING" id="10116.ENSRNOP00000007662"/>
<dbReference type="iPTMnet" id="Q64289"/>
<dbReference type="PhosphoSitePlus" id="Q64289"/>
<dbReference type="PaxDb" id="10116-ENSRNOP00000007662"/>
<dbReference type="Ensembl" id="ENSRNOT00000007662.8">
    <property type="protein sequence ID" value="ENSRNOP00000007662.5"/>
    <property type="gene ID" value="ENSRNOG00000005609.8"/>
</dbReference>
<dbReference type="GeneID" id="29458"/>
<dbReference type="KEGG" id="rno:29458"/>
<dbReference type="UCSC" id="RGD:3165">
    <property type="organism name" value="rat"/>
</dbReference>
<dbReference type="AGR" id="RGD:3165"/>
<dbReference type="CTD" id="4760"/>
<dbReference type="RGD" id="3165">
    <property type="gene designation" value="Neurod1"/>
</dbReference>
<dbReference type="eggNOG" id="KOG3898">
    <property type="taxonomic scope" value="Eukaryota"/>
</dbReference>
<dbReference type="GeneTree" id="ENSGT00940000160478"/>
<dbReference type="HOGENOM" id="CLU_055134_0_0_1"/>
<dbReference type="InParanoid" id="Q64289"/>
<dbReference type="OMA" id="SFKHEPA"/>
<dbReference type="OrthoDB" id="10039134at2759"/>
<dbReference type="PhylomeDB" id="Q64289"/>
<dbReference type="TreeFam" id="TF315153"/>
<dbReference type="PRO" id="PR:Q64289"/>
<dbReference type="Proteomes" id="UP000002494">
    <property type="component" value="Chromosome 3"/>
</dbReference>
<dbReference type="Bgee" id="ENSRNOG00000005609">
    <property type="expression patterns" value="Expressed in cerebellum and 8 other cell types or tissues"/>
</dbReference>
<dbReference type="GO" id="GO:0005737">
    <property type="term" value="C:cytoplasm"/>
    <property type="evidence" value="ECO:0000314"/>
    <property type="project" value="UniProtKB"/>
</dbReference>
<dbReference type="GO" id="GO:0005634">
    <property type="term" value="C:nucleus"/>
    <property type="evidence" value="ECO:0000314"/>
    <property type="project" value="UniProtKB"/>
</dbReference>
<dbReference type="GO" id="GO:0090575">
    <property type="term" value="C:RNA polymerase II transcription regulator complex"/>
    <property type="evidence" value="ECO:0000266"/>
    <property type="project" value="RGD"/>
</dbReference>
<dbReference type="GO" id="GO:0003682">
    <property type="term" value="F:chromatin binding"/>
    <property type="evidence" value="ECO:0000250"/>
    <property type="project" value="UniProtKB"/>
</dbReference>
<dbReference type="GO" id="GO:0003677">
    <property type="term" value="F:DNA binding"/>
    <property type="evidence" value="ECO:0000266"/>
    <property type="project" value="RGD"/>
</dbReference>
<dbReference type="GO" id="GO:0001228">
    <property type="term" value="F:DNA-binding transcription activator activity, RNA polymerase II-specific"/>
    <property type="evidence" value="ECO:0000266"/>
    <property type="project" value="RGD"/>
</dbReference>
<dbReference type="GO" id="GO:0003700">
    <property type="term" value="F:DNA-binding transcription factor activity"/>
    <property type="evidence" value="ECO:0000266"/>
    <property type="project" value="RGD"/>
</dbReference>
<dbReference type="GO" id="GO:0000981">
    <property type="term" value="F:DNA-binding transcription factor activity, RNA polymerase II-specific"/>
    <property type="evidence" value="ECO:0000266"/>
    <property type="project" value="RGD"/>
</dbReference>
<dbReference type="GO" id="GO:0003690">
    <property type="term" value="F:double-stranded DNA binding"/>
    <property type="evidence" value="ECO:0000314"/>
    <property type="project" value="RGD"/>
</dbReference>
<dbReference type="GO" id="GO:0070888">
    <property type="term" value="F:E-box binding"/>
    <property type="evidence" value="ECO:0000266"/>
    <property type="project" value="RGD"/>
</dbReference>
<dbReference type="GO" id="GO:0046982">
    <property type="term" value="F:protein heterodimerization activity"/>
    <property type="evidence" value="ECO:0000266"/>
    <property type="project" value="RGD"/>
</dbReference>
<dbReference type="GO" id="GO:0000978">
    <property type="term" value="F:RNA polymerase II cis-regulatory region sequence-specific DNA binding"/>
    <property type="evidence" value="ECO:0000266"/>
    <property type="project" value="RGD"/>
</dbReference>
<dbReference type="GO" id="GO:0061629">
    <property type="term" value="F:RNA polymerase II-specific DNA-binding transcription factor binding"/>
    <property type="evidence" value="ECO:0000266"/>
    <property type="project" value="RGD"/>
</dbReference>
<dbReference type="GO" id="GO:0043565">
    <property type="term" value="F:sequence-specific DNA binding"/>
    <property type="evidence" value="ECO:0000266"/>
    <property type="project" value="RGD"/>
</dbReference>
<dbReference type="GO" id="GO:1990837">
    <property type="term" value="F:sequence-specific double-stranded DNA binding"/>
    <property type="evidence" value="ECO:0000266"/>
    <property type="project" value="RGD"/>
</dbReference>
<dbReference type="GO" id="GO:0035881">
    <property type="term" value="P:amacrine cell differentiation"/>
    <property type="evidence" value="ECO:0000250"/>
    <property type="project" value="UniProtKB"/>
</dbReference>
<dbReference type="GO" id="GO:0009952">
    <property type="term" value="P:anterior/posterior pattern specification"/>
    <property type="evidence" value="ECO:0000266"/>
    <property type="project" value="RGD"/>
</dbReference>
<dbReference type="GO" id="GO:0061564">
    <property type="term" value="P:axon development"/>
    <property type="evidence" value="ECO:0000318"/>
    <property type="project" value="GO_Central"/>
</dbReference>
<dbReference type="GO" id="GO:0043010">
    <property type="term" value="P:camera-type eye development"/>
    <property type="evidence" value="ECO:0000266"/>
    <property type="project" value="RGD"/>
</dbReference>
<dbReference type="GO" id="GO:0045165">
    <property type="term" value="P:cell fate commitment"/>
    <property type="evidence" value="ECO:0000266"/>
    <property type="project" value="RGD"/>
</dbReference>
<dbReference type="GO" id="GO:0007259">
    <property type="term" value="P:cell surface receptor signaling pathway via JAK-STAT"/>
    <property type="evidence" value="ECO:0000266"/>
    <property type="project" value="RGD"/>
</dbReference>
<dbReference type="GO" id="GO:0071333">
    <property type="term" value="P:cellular response to glucose stimulus"/>
    <property type="evidence" value="ECO:0000314"/>
    <property type="project" value="UniProtKB"/>
</dbReference>
<dbReference type="GO" id="GO:0021549">
    <property type="term" value="P:cerebellum development"/>
    <property type="evidence" value="ECO:0000270"/>
    <property type="project" value="RGD"/>
</dbReference>
<dbReference type="GO" id="GO:0021542">
    <property type="term" value="P:dentate gyrus development"/>
    <property type="evidence" value="ECO:0000250"/>
    <property type="project" value="UniProtKB"/>
</dbReference>
<dbReference type="GO" id="GO:0048562">
    <property type="term" value="P:embryonic organ morphogenesis"/>
    <property type="evidence" value="ECO:0000266"/>
    <property type="project" value="RGD"/>
</dbReference>
<dbReference type="GO" id="GO:0031018">
    <property type="term" value="P:endocrine pancreas development"/>
    <property type="evidence" value="ECO:0000250"/>
    <property type="project" value="UniProtKB"/>
</dbReference>
<dbReference type="GO" id="GO:0035883">
    <property type="term" value="P:enteroendocrine cell differentiation"/>
    <property type="evidence" value="ECO:0000250"/>
    <property type="project" value="UniProtKB"/>
</dbReference>
<dbReference type="GO" id="GO:0042593">
    <property type="term" value="P:glucose homeostasis"/>
    <property type="evidence" value="ECO:0000266"/>
    <property type="project" value="RGD"/>
</dbReference>
<dbReference type="GO" id="GO:0030902">
    <property type="term" value="P:hindbrain development"/>
    <property type="evidence" value="ECO:0000266"/>
    <property type="project" value="RGD"/>
</dbReference>
<dbReference type="GO" id="GO:0048839">
    <property type="term" value="P:inner ear development"/>
    <property type="evidence" value="ECO:0000250"/>
    <property type="project" value="UniProtKB"/>
</dbReference>
<dbReference type="GO" id="GO:0030073">
    <property type="term" value="P:insulin secretion"/>
    <property type="evidence" value="ECO:0000266"/>
    <property type="project" value="RGD"/>
</dbReference>
<dbReference type="GO" id="GO:0046426">
    <property type="term" value="P:negative regulation of receptor signaling pathway via JAK-STAT"/>
    <property type="evidence" value="ECO:0000266"/>
    <property type="project" value="RGD"/>
</dbReference>
<dbReference type="GO" id="GO:2000675">
    <property type="term" value="P:negative regulation of type B pancreatic cell apoptotic process"/>
    <property type="evidence" value="ECO:0000266"/>
    <property type="project" value="RGD"/>
</dbReference>
<dbReference type="GO" id="GO:0006913">
    <property type="term" value="P:nucleocytoplasmic transport"/>
    <property type="evidence" value="ECO:0000314"/>
    <property type="project" value="UniProtKB"/>
</dbReference>
<dbReference type="GO" id="GO:0003326">
    <property type="term" value="P:pancreatic A cell fate commitment"/>
    <property type="evidence" value="ECO:0000266"/>
    <property type="project" value="RGD"/>
</dbReference>
<dbReference type="GO" id="GO:0003329">
    <property type="term" value="P:pancreatic PP cell fate commitment"/>
    <property type="evidence" value="ECO:0000266"/>
    <property type="project" value="RGD"/>
</dbReference>
<dbReference type="GO" id="GO:0043065">
    <property type="term" value="P:positive regulation of apoptotic process"/>
    <property type="evidence" value="ECO:0000250"/>
    <property type="project" value="UniProtKB"/>
</dbReference>
<dbReference type="GO" id="GO:0045597">
    <property type="term" value="P:positive regulation of cell differentiation"/>
    <property type="evidence" value="ECO:0000250"/>
    <property type="project" value="UniProtKB"/>
</dbReference>
<dbReference type="GO" id="GO:0045893">
    <property type="term" value="P:positive regulation of DNA-templated transcription"/>
    <property type="evidence" value="ECO:0000250"/>
    <property type="project" value="UniProtKB"/>
</dbReference>
<dbReference type="GO" id="GO:0045666">
    <property type="term" value="P:positive regulation of neuron differentiation"/>
    <property type="evidence" value="ECO:0000314"/>
    <property type="project" value="RGD"/>
</dbReference>
<dbReference type="GO" id="GO:0045944">
    <property type="term" value="P:positive regulation of transcription by RNA polymerase II"/>
    <property type="evidence" value="ECO:0000314"/>
    <property type="project" value="UniProtKB"/>
</dbReference>
<dbReference type="GO" id="GO:0060730">
    <property type="term" value="P:regulation of intestinal epithelial structure maintenance"/>
    <property type="evidence" value="ECO:0000250"/>
    <property type="project" value="UniProtKB"/>
</dbReference>
<dbReference type="GO" id="GO:0045664">
    <property type="term" value="P:regulation of neuron differentiation"/>
    <property type="evidence" value="ECO:0000266"/>
    <property type="project" value="RGD"/>
</dbReference>
<dbReference type="GO" id="GO:0009749">
    <property type="term" value="P:response to glucose"/>
    <property type="evidence" value="ECO:0000266"/>
    <property type="project" value="RGD"/>
</dbReference>
<dbReference type="GO" id="GO:0007423">
    <property type="term" value="P:sensory organ development"/>
    <property type="evidence" value="ECO:0000318"/>
    <property type="project" value="GO_Central"/>
</dbReference>
<dbReference type="GO" id="GO:0023019">
    <property type="term" value="P:signal transduction involved in regulation of gene expression"/>
    <property type="evidence" value="ECO:0000266"/>
    <property type="project" value="RGD"/>
</dbReference>
<dbReference type="GO" id="GO:0006366">
    <property type="term" value="P:transcription by RNA polymerase II"/>
    <property type="evidence" value="ECO:0000266"/>
    <property type="project" value="RGD"/>
</dbReference>
<dbReference type="CDD" id="cd19719">
    <property type="entry name" value="bHLH_TS_NeuroD1"/>
    <property type="match status" value="1"/>
</dbReference>
<dbReference type="FunFam" id="4.10.280.10:FF:000006">
    <property type="entry name" value="Neurogenic differentiation factor"/>
    <property type="match status" value="1"/>
</dbReference>
<dbReference type="Gene3D" id="4.10.280.10">
    <property type="entry name" value="Helix-loop-helix DNA-binding domain"/>
    <property type="match status" value="1"/>
</dbReference>
<dbReference type="InterPro" id="IPR011598">
    <property type="entry name" value="bHLH_dom"/>
</dbReference>
<dbReference type="InterPro" id="IPR050359">
    <property type="entry name" value="bHLH_transcription_factors"/>
</dbReference>
<dbReference type="InterPro" id="IPR036638">
    <property type="entry name" value="HLH_DNA-bd_sf"/>
</dbReference>
<dbReference type="InterPro" id="IPR022575">
    <property type="entry name" value="NeuroD_DUF"/>
</dbReference>
<dbReference type="InterPro" id="IPR016637">
    <property type="entry name" value="TF_bHLH_NeuroD"/>
</dbReference>
<dbReference type="PANTHER" id="PTHR19290">
    <property type="entry name" value="BASIC HELIX-LOOP-HELIX PROTEIN NEUROGENIN-RELATED"/>
    <property type="match status" value="1"/>
</dbReference>
<dbReference type="PANTHER" id="PTHR19290:SF88">
    <property type="entry name" value="NEUROGENIC DIFFERENTIATION FACTOR 1"/>
    <property type="match status" value="1"/>
</dbReference>
<dbReference type="Pfam" id="PF00010">
    <property type="entry name" value="HLH"/>
    <property type="match status" value="1"/>
</dbReference>
<dbReference type="Pfam" id="PF12533">
    <property type="entry name" value="Neuro_bHLH"/>
    <property type="match status" value="1"/>
</dbReference>
<dbReference type="PIRSF" id="PIRSF015618">
    <property type="entry name" value="bHLH_NeuroD"/>
    <property type="match status" value="1"/>
</dbReference>
<dbReference type="SMART" id="SM00353">
    <property type="entry name" value="HLH"/>
    <property type="match status" value="1"/>
</dbReference>
<dbReference type="SUPFAM" id="SSF47459">
    <property type="entry name" value="HLH, helix-loop-helix DNA-binding domain"/>
    <property type="match status" value="1"/>
</dbReference>
<dbReference type="PROSITE" id="PS50888">
    <property type="entry name" value="BHLH"/>
    <property type="match status" value="1"/>
</dbReference>
<organism>
    <name type="scientific">Rattus norvegicus</name>
    <name type="common">Rat</name>
    <dbReference type="NCBI Taxonomy" id="10116"/>
    <lineage>
        <taxon>Eukaryota</taxon>
        <taxon>Metazoa</taxon>
        <taxon>Chordata</taxon>
        <taxon>Craniata</taxon>
        <taxon>Vertebrata</taxon>
        <taxon>Euteleostomi</taxon>
        <taxon>Mammalia</taxon>
        <taxon>Eutheria</taxon>
        <taxon>Euarchontoglires</taxon>
        <taxon>Glires</taxon>
        <taxon>Rodentia</taxon>
        <taxon>Myomorpha</taxon>
        <taxon>Muroidea</taxon>
        <taxon>Muridae</taxon>
        <taxon>Murinae</taxon>
        <taxon>Rattus</taxon>
    </lineage>
</organism>